<name>MUKE_PASMU</name>
<accession>Q9CN37</accession>
<protein>
    <recommendedName>
        <fullName evidence="1">Chromosome partition protein MukE</fullName>
    </recommendedName>
</protein>
<comment type="function">
    <text evidence="1">Involved in chromosome condensation, segregation and cell cycle progression. May participate in facilitating chromosome segregation by condensation DNA from both sides of a centrally located replisome during cell division. Probably acts via its interaction with MukB and MukF.</text>
</comment>
<comment type="subunit">
    <text evidence="1">Interacts, and probably forms a ternary complex, with MukF and MukB. The complex formation is stimulated by calcium or magnesium.</text>
</comment>
<comment type="subcellular location">
    <subcellularLocation>
        <location evidence="1">Cytoplasm</location>
        <location evidence="1">Nucleoid</location>
    </subcellularLocation>
    <text evidence="1">Restricted to the nucleoid region.</text>
</comment>
<comment type="similarity">
    <text evidence="1">Belongs to the MukE family.</text>
</comment>
<sequence>MTDNLQDLISTKLAAAIANPLFPAVDSQLRAGRHISLDQLDNHAFLMDFQGELDSFYRRYNVELIRAPEGFFYLRPKATTLIARSVLTELEMLVGKVLCYLYLSPERLAQQGIFSTQEVYDELLNLADENKLLKAVNQRSSGSDLDKQKLAEKVRAALNRLRRLGMIHGVGEQNSGKFTIAEAVFRFGAEVRAGDDPREAQLRLIRDGEAATPDSLALEKQADLNEVDDNDELEDELDDEEHA</sequence>
<gene>
    <name evidence="1" type="primary">mukE</name>
    <name type="ordered locus">PM0608</name>
</gene>
<proteinExistence type="inferred from homology"/>
<evidence type="ECO:0000255" key="1">
    <source>
        <dbReference type="HAMAP-Rule" id="MF_01802"/>
    </source>
</evidence>
<evidence type="ECO:0000256" key="2">
    <source>
        <dbReference type="SAM" id="MobiDB-lite"/>
    </source>
</evidence>
<reference key="1">
    <citation type="journal article" date="2001" name="Proc. Natl. Acad. Sci. U.S.A.">
        <title>Complete genomic sequence of Pasteurella multocida Pm70.</title>
        <authorList>
            <person name="May B.J."/>
            <person name="Zhang Q."/>
            <person name="Li L.L."/>
            <person name="Paustian M.L."/>
            <person name="Whittam T.S."/>
            <person name="Kapur V."/>
        </authorList>
    </citation>
    <scope>NUCLEOTIDE SEQUENCE [LARGE SCALE GENOMIC DNA]</scope>
    <source>
        <strain>Pm70</strain>
    </source>
</reference>
<dbReference type="EMBL" id="AE004439">
    <property type="protein sequence ID" value="AAK02692.1"/>
    <property type="molecule type" value="Genomic_DNA"/>
</dbReference>
<dbReference type="RefSeq" id="WP_005722179.1">
    <property type="nucleotide sequence ID" value="NC_002663.1"/>
</dbReference>
<dbReference type="SMR" id="Q9CN37"/>
<dbReference type="STRING" id="272843.PM0608"/>
<dbReference type="EnsemblBacteria" id="AAK02692">
    <property type="protein sequence ID" value="AAK02692"/>
    <property type="gene ID" value="PM0608"/>
</dbReference>
<dbReference type="GeneID" id="77208043"/>
<dbReference type="KEGG" id="pmu:PM0608"/>
<dbReference type="HOGENOM" id="CLU_1146408_0_0_6"/>
<dbReference type="OrthoDB" id="6196648at2"/>
<dbReference type="Proteomes" id="UP000000809">
    <property type="component" value="Chromosome"/>
</dbReference>
<dbReference type="GO" id="GO:0005737">
    <property type="term" value="C:cytoplasm"/>
    <property type="evidence" value="ECO:0007669"/>
    <property type="project" value="UniProtKB-UniRule"/>
</dbReference>
<dbReference type="GO" id="GO:0009295">
    <property type="term" value="C:nucleoid"/>
    <property type="evidence" value="ECO:0007669"/>
    <property type="project" value="UniProtKB-SubCell"/>
</dbReference>
<dbReference type="GO" id="GO:0051301">
    <property type="term" value="P:cell division"/>
    <property type="evidence" value="ECO:0007669"/>
    <property type="project" value="UniProtKB-KW"/>
</dbReference>
<dbReference type="GO" id="GO:0030261">
    <property type="term" value="P:chromosome condensation"/>
    <property type="evidence" value="ECO:0007669"/>
    <property type="project" value="UniProtKB-KW"/>
</dbReference>
<dbReference type="GO" id="GO:0007059">
    <property type="term" value="P:chromosome segregation"/>
    <property type="evidence" value="ECO:0007669"/>
    <property type="project" value="UniProtKB-UniRule"/>
</dbReference>
<dbReference type="GO" id="GO:0006260">
    <property type="term" value="P:DNA replication"/>
    <property type="evidence" value="ECO:0007669"/>
    <property type="project" value="UniProtKB-UniRule"/>
</dbReference>
<dbReference type="Gene3D" id="1.10.10.2250">
    <property type="match status" value="1"/>
</dbReference>
<dbReference type="Gene3D" id="1.10.10.2260">
    <property type="entry name" value="MukE-like family, C-terminal domain"/>
    <property type="match status" value="1"/>
</dbReference>
<dbReference type="HAMAP" id="MF_01802">
    <property type="entry name" value="MukE"/>
    <property type="match status" value="1"/>
</dbReference>
<dbReference type="InterPro" id="IPR042037">
    <property type="entry name" value="MukE_C"/>
</dbReference>
<dbReference type="InterPro" id="IPR042038">
    <property type="entry name" value="MukE_N"/>
</dbReference>
<dbReference type="InterPro" id="IPR007385">
    <property type="entry name" value="Scp_MukE"/>
</dbReference>
<dbReference type="NCBIfam" id="NF003602">
    <property type="entry name" value="PRK05256.1"/>
    <property type="match status" value="1"/>
</dbReference>
<dbReference type="Pfam" id="PF04288">
    <property type="entry name" value="MukE"/>
    <property type="match status" value="1"/>
</dbReference>
<organism>
    <name type="scientific">Pasteurella multocida (strain Pm70)</name>
    <dbReference type="NCBI Taxonomy" id="272843"/>
    <lineage>
        <taxon>Bacteria</taxon>
        <taxon>Pseudomonadati</taxon>
        <taxon>Pseudomonadota</taxon>
        <taxon>Gammaproteobacteria</taxon>
        <taxon>Pasteurellales</taxon>
        <taxon>Pasteurellaceae</taxon>
        <taxon>Pasteurella</taxon>
    </lineage>
</organism>
<keyword id="KW-0131">Cell cycle</keyword>
<keyword id="KW-0132">Cell division</keyword>
<keyword id="KW-0159">Chromosome partition</keyword>
<keyword id="KW-0963">Cytoplasm</keyword>
<keyword id="KW-0226">DNA condensation</keyword>
<keyword id="KW-1185">Reference proteome</keyword>
<feature type="chain" id="PRO_0000206798" description="Chromosome partition protein MukE">
    <location>
        <begin position="1"/>
        <end position="243"/>
    </location>
</feature>
<feature type="region of interest" description="Disordered" evidence="2">
    <location>
        <begin position="214"/>
        <end position="243"/>
    </location>
</feature>
<feature type="compositionally biased region" description="Acidic residues" evidence="2">
    <location>
        <begin position="225"/>
        <end position="243"/>
    </location>
</feature>